<name>UVRC_ARTS2</name>
<sequence>MADPASYRPQTGEIPTNPGVYRFRDPHGRVIYVGKAKSLRSRLNSYFANPGGLLPKTYAMVHAASSVEWTVVASELESLQLEYTWIKEFKPRFNVVFRDDKTYPYLAVTMGEKFPRVQVLRGERRKGTRYFGPYTAGAIRETMDTLLRVFPVRSCSPGVLKRAQASGRPCLLGYIDKCAAPCVGRVTPEEHRALAEDFCSFMGGEAKRFIGRLEKDMAAAVAELDYERAARVRDDIIALRKVFERNAVVLAEDTDADVFALHEDELEAAVQVFHVRGGRVRGQRGWVVEKVEDFTTPDLVEHLLQQVYGEEGETQGRLPREVLVPEEPSNAAELAQWLAGLRGAKVDIRVPRRGDKAALMSTVRENAEHALKLHKSRRAGDLTNRSLALQELQEALDLPVALLRIECFDISHVQGTNVVASMVVVEDGLPKKSDYRKFSITGAAAVDDTAAMHDVLTRRFRNYLQEKAAQAEAAQLPGHQAALEAMAVASMQDTTTPAPRAKFAYPPNLVVVDGGKPQVNAAARALAELGIDDVYVVGLAKRLEEVWLPDSDFPVILPRTSEGLYLLQRIRDEAHRFAITFHRQKRGKAMTVSALDSVPGLGEAKRKALLAQFGSVKSIRTASAAELATAKGIGPSLADAIVSHFSNGAAASGAEAPSINMTTGEIIET</sequence>
<accession>A0JWP2</accession>
<keyword id="KW-0963">Cytoplasm</keyword>
<keyword id="KW-0227">DNA damage</keyword>
<keyword id="KW-0228">DNA excision</keyword>
<keyword id="KW-0234">DNA repair</keyword>
<keyword id="KW-0267">Excision nuclease</keyword>
<keyword id="KW-1185">Reference proteome</keyword>
<keyword id="KW-0742">SOS response</keyword>
<dbReference type="EMBL" id="CP000454">
    <property type="protein sequence ID" value="ABK03462.1"/>
    <property type="molecule type" value="Genomic_DNA"/>
</dbReference>
<dbReference type="RefSeq" id="WP_011691928.1">
    <property type="nucleotide sequence ID" value="NC_008541.1"/>
</dbReference>
<dbReference type="SMR" id="A0JWP2"/>
<dbReference type="STRING" id="290399.Arth_2082"/>
<dbReference type="KEGG" id="art:Arth_2082"/>
<dbReference type="eggNOG" id="COG0322">
    <property type="taxonomic scope" value="Bacteria"/>
</dbReference>
<dbReference type="HOGENOM" id="CLU_014841_1_1_11"/>
<dbReference type="OrthoDB" id="9804933at2"/>
<dbReference type="Proteomes" id="UP000000754">
    <property type="component" value="Chromosome"/>
</dbReference>
<dbReference type="GO" id="GO:0005737">
    <property type="term" value="C:cytoplasm"/>
    <property type="evidence" value="ECO:0007669"/>
    <property type="project" value="UniProtKB-SubCell"/>
</dbReference>
<dbReference type="GO" id="GO:0009380">
    <property type="term" value="C:excinuclease repair complex"/>
    <property type="evidence" value="ECO:0007669"/>
    <property type="project" value="InterPro"/>
</dbReference>
<dbReference type="GO" id="GO:0003677">
    <property type="term" value="F:DNA binding"/>
    <property type="evidence" value="ECO:0007669"/>
    <property type="project" value="UniProtKB-UniRule"/>
</dbReference>
<dbReference type="GO" id="GO:0009381">
    <property type="term" value="F:excinuclease ABC activity"/>
    <property type="evidence" value="ECO:0007669"/>
    <property type="project" value="UniProtKB-UniRule"/>
</dbReference>
<dbReference type="GO" id="GO:0006289">
    <property type="term" value="P:nucleotide-excision repair"/>
    <property type="evidence" value="ECO:0007669"/>
    <property type="project" value="UniProtKB-UniRule"/>
</dbReference>
<dbReference type="GO" id="GO:0009432">
    <property type="term" value="P:SOS response"/>
    <property type="evidence" value="ECO:0007669"/>
    <property type="project" value="UniProtKB-UniRule"/>
</dbReference>
<dbReference type="CDD" id="cd10434">
    <property type="entry name" value="GIY-YIG_UvrC_Cho"/>
    <property type="match status" value="1"/>
</dbReference>
<dbReference type="FunFam" id="3.40.1440.10:FF:000001">
    <property type="entry name" value="UvrABC system protein C"/>
    <property type="match status" value="1"/>
</dbReference>
<dbReference type="Gene3D" id="1.10.150.20">
    <property type="entry name" value="5' to 3' exonuclease, C-terminal subdomain"/>
    <property type="match status" value="1"/>
</dbReference>
<dbReference type="Gene3D" id="3.40.1440.10">
    <property type="entry name" value="GIY-YIG endonuclease"/>
    <property type="match status" value="1"/>
</dbReference>
<dbReference type="Gene3D" id="4.10.860.10">
    <property type="entry name" value="UVR domain"/>
    <property type="match status" value="1"/>
</dbReference>
<dbReference type="Gene3D" id="3.30.420.340">
    <property type="entry name" value="UvrC, RNAse H endonuclease domain"/>
    <property type="match status" value="1"/>
</dbReference>
<dbReference type="HAMAP" id="MF_00203">
    <property type="entry name" value="UvrC"/>
    <property type="match status" value="1"/>
</dbReference>
<dbReference type="InterPro" id="IPR000305">
    <property type="entry name" value="GIY-YIG_endonuc"/>
</dbReference>
<dbReference type="InterPro" id="IPR035901">
    <property type="entry name" value="GIY-YIG_endonuc_sf"/>
</dbReference>
<dbReference type="InterPro" id="IPR047296">
    <property type="entry name" value="GIY-YIG_UvrC_Cho"/>
</dbReference>
<dbReference type="InterPro" id="IPR003583">
    <property type="entry name" value="Hlx-hairpin-Hlx_DNA-bd_motif"/>
</dbReference>
<dbReference type="InterPro" id="IPR010994">
    <property type="entry name" value="RuvA_2-like"/>
</dbReference>
<dbReference type="InterPro" id="IPR001943">
    <property type="entry name" value="UVR_dom"/>
</dbReference>
<dbReference type="InterPro" id="IPR036876">
    <property type="entry name" value="UVR_dom_sf"/>
</dbReference>
<dbReference type="InterPro" id="IPR050066">
    <property type="entry name" value="UvrABC_protein_C"/>
</dbReference>
<dbReference type="InterPro" id="IPR004791">
    <property type="entry name" value="UvrC"/>
</dbReference>
<dbReference type="InterPro" id="IPR001162">
    <property type="entry name" value="UvrC_RNase_H_dom"/>
</dbReference>
<dbReference type="InterPro" id="IPR038476">
    <property type="entry name" value="UvrC_RNase_H_dom_sf"/>
</dbReference>
<dbReference type="NCBIfam" id="NF001824">
    <property type="entry name" value="PRK00558.1-5"/>
    <property type="match status" value="1"/>
</dbReference>
<dbReference type="NCBIfam" id="TIGR00194">
    <property type="entry name" value="uvrC"/>
    <property type="match status" value="1"/>
</dbReference>
<dbReference type="PANTHER" id="PTHR30562:SF1">
    <property type="entry name" value="UVRABC SYSTEM PROTEIN C"/>
    <property type="match status" value="1"/>
</dbReference>
<dbReference type="PANTHER" id="PTHR30562">
    <property type="entry name" value="UVRC/OXIDOREDUCTASE"/>
    <property type="match status" value="1"/>
</dbReference>
<dbReference type="Pfam" id="PF01541">
    <property type="entry name" value="GIY-YIG"/>
    <property type="match status" value="1"/>
</dbReference>
<dbReference type="Pfam" id="PF14520">
    <property type="entry name" value="HHH_5"/>
    <property type="match status" value="1"/>
</dbReference>
<dbReference type="Pfam" id="PF02151">
    <property type="entry name" value="UVR"/>
    <property type="match status" value="1"/>
</dbReference>
<dbReference type="Pfam" id="PF22920">
    <property type="entry name" value="UvrC_RNaseH"/>
    <property type="match status" value="1"/>
</dbReference>
<dbReference type="Pfam" id="PF08459">
    <property type="entry name" value="UvrC_RNaseH_dom"/>
    <property type="match status" value="1"/>
</dbReference>
<dbReference type="SMART" id="SM00465">
    <property type="entry name" value="GIYc"/>
    <property type="match status" value="1"/>
</dbReference>
<dbReference type="SMART" id="SM00278">
    <property type="entry name" value="HhH1"/>
    <property type="match status" value="2"/>
</dbReference>
<dbReference type="SUPFAM" id="SSF46600">
    <property type="entry name" value="C-terminal UvrC-binding domain of UvrB"/>
    <property type="match status" value="1"/>
</dbReference>
<dbReference type="SUPFAM" id="SSF82771">
    <property type="entry name" value="GIY-YIG endonuclease"/>
    <property type="match status" value="1"/>
</dbReference>
<dbReference type="SUPFAM" id="SSF47781">
    <property type="entry name" value="RuvA domain 2-like"/>
    <property type="match status" value="1"/>
</dbReference>
<dbReference type="PROSITE" id="PS50164">
    <property type="entry name" value="GIY_YIG"/>
    <property type="match status" value="1"/>
</dbReference>
<dbReference type="PROSITE" id="PS50151">
    <property type="entry name" value="UVR"/>
    <property type="match status" value="1"/>
</dbReference>
<dbReference type="PROSITE" id="PS50165">
    <property type="entry name" value="UVRC"/>
    <property type="match status" value="1"/>
</dbReference>
<proteinExistence type="inferred from homology"/>
<protein>
    <recommendedName>
        <fullName evidence="1">UvrABC system protein C</fullName>
        <shortName evidence="1">Protein UvrC</shortName>
    </recommendedName>
    <alternativeName>
        <fullName evidence="1">Excinuclease ABC subunit C</fullName>
    </alternativeName>
</protein>
<comment type="function">
    <text evidence="1">The UvrABC repair system catalyzes the recognition and processing of DNA lesions. UvrC both incises the 5' and 3' sides of the lesion. The N-terminal half is responsible for the 3' incision and the C-terminal half is responsible for the 5' incision.</text>
</comment>
<comment type="subunit">
    <text evidence="1">Interacts with UvrB in an incision complex.</text>
</comment>
<comment type="subcellular location">
    <subcellularLocation>
        <location evidence="1">Cytoplasm</location>
    </subcellularLocation>
</comment>
<comment type="similarity">
    <text evidence="1">Belongs to the UvrC family.</text>
</comment>
<reference key="1">
    <citation type="journal article" date="2013" name="Stand. Genomic Sci.">
        <title>Complete genome sequence of Arthrobacter sp. strain FB24.</title>
        <authorList>
            <person name="Nakatsu C.H."/>
            <person name="Barabote R."/>
            <person name="Thompson S."/>
            <person name="Bruce D."/>
            <person name="Detter C."/>
            <person name="Brettin T."/>
            <person name="Han C."/>
            <person name="Beasley F."/>
            <person name="Chen W."/>
            <person name="Konopka A."/>
            <person name="Xie G."/>
        </authorList>
    </citation>
    <scope>NUCLEOTIDE SEQUENCE [LARGE SCALE GENOMIC DNA]</scope>
    <source>
        <strain>FB24</strain>
    </source>
</reference>
<evidence type="ECO:0000255" key="1">
    <source>
        <dbReference type="HAMAP-Rule" id="MF_00203"/>
    </source>
</evidence>
<organism>
    <name type="scientific">Arthrobacter sp. (strain FB24)</name>
    <dbReference type="NCBI Taxonomy" id="290399"/>
    <lineage>
        <taxon>Bacteria</taxon>
        <taxon>Bacillati</taxon>
        <taxon>Actinomycetota</taxon>
        <taxon>Actinomycetes</taxon>
        <taxon>Micrococcales</taxon>
        <taxon>Micrococcaceae</taxon>
        <taxon>Arthrobacter</taxon>
    </lineage>
</organism>
<feature type="chain" id="PRO_1000077753" description="UvrABC system protein C">
    <location>
        <begin position="1"/>
        <end position="669"/>
    </location>
</feature>
<feature type="domain" description="GIY-YIG" evidence="1">
    <location>
        <begin position="16"/>
        <end position="95"/>
    </location>
</feature>
<feature type="domain" description="UVR" evidence="1">
    <location>
        <begin position="207"/>
        <end position="242"/>
    </location>
</feature>
<gene>
    <name evidence="1" type="primary">uvrC</name>
    <name type="ordered locus">Arth_2082</name>
</gene>